<keyword id="KW-1003">Cell membrane</keyword>
<keyword id="KW-0407">Ion channel</keyword>
<keyword id="KW-0406">Ion transport</keyword>
<keyword id="KW-0472">Membrane</keyword>
<keyword id="KW-0479">Metal-binding</keyword>
<keyword id="KW-1185">Reference proteome</keyword>
<keyword id="KW-0915">Sodium</keyword>
<keyword id="KW-0812">Transmembrane</keyword>
<keyword id="KW-1133">Transmembrane helix</keyword>
<keyword id="KW-0813">Transport</keyword>
<gene>
    <name evidence="1" type="primary">fluC1</name>
    <name evidence="1" type="synonym">crcB1</name>
    <name type="ordered locus">Lxx00680</name>
</gene>
<feature type="chain" id="PRO_0000110121" description="Fluoride-specific ion channel FluC 1">
    <location>
        <begin position="1"/>
        <end position="137"/>
    </location>
</feature>
<feature type="transmembrane region" description="Helical" evidence="1">
    <location>
        <begin position="3"/>
        <end position="23"/>
    </location>
</feature>
<feature type="transmembrane region" description="Helical" evidence="1">
    <location>
        <begin position="42"/>
        <end position="62"/>
    </location>
</feature>
<feature type="transmembrane region" description="Helical" evidence="1">
    <location>
        <begin position="69"/>
        <end position="89"/>
    </location>
</feature>
<feature type="transmembrane region" description="Helical" evidence="1">
    <location>
        <begin position="107"/>
        <end position="127"/>
    </location>
</feature>
<feature type="binding site" evidence="1">
    <location>
        <position position="76"/>
    </location>
    <ligand>
        <name>Na(+)</name>
        <dbReference type="ChEBI" id="CHEBI:29101"/>
        <note>structural</note>
    </ligand>
</feature>
<feature type="binding site" evidence="1">
    <location>
        <position position="79"/>
    </location>
    <ligand>
        <name>Na(+)</name>
        <dbReference type="ChEBI" id="CHEBI:29101"/>
        <note>structural</note>
    </ligand>
</feature>
<proteinExistence type="inferred from homology"/>
<comment type="function">
    <text evidence="1">Fluoride-specific ion channel. Important for reducing fluoride concentration in the cell, thus reducing its toxicity.</text>
</comment>
<comment type="catalytic activity">
    <reaction evidence="1">
        <text>fluoride(in) = fluoride(out)</text>
        <dbReference type="Rhea" id="RHEA:76159"/>
        <dbReference type="ChEBI" id="CHEBI:17051"/>
    </reaction>
    <physiologicalReaction direction="left-to-right" evidence="1">
        <dbReference type="Rhea" id="RHEA:76160"/>
    </physiologicalReaction>
</comment>
<comment type="activity regulation">
    <text evidence="1">Na(+) is not transported, but it plays an essential structural role and its presence is essential for fluoride channel function.</text>
</comment>
<comment type="subcellular location">
    <subcellularLocation>
        <location evidence="1">Cell membrane</location>
        <topology evidence="1">Multi-pass membrane protein</topology>
    </subcellularLocation>
</comment>
<comment type="similarity">
    <text evidence="1">Belongs to the fluoride channel Fluc/FEX (TC 1.A.43) family.</text>
</comment>
<name>FLUC1_LEIXX</name>
<evidence type="ECO:0000255" key="1">
    <source>
        <dbReference type="HAMAP-Rule" id="MF_00454"/>
    </source>
</evidence>
<accession>Q6AHI5</accession>
<sequence length="137" mass="13800">MTPLVVLAVAIAGGLGAVARLVLDGVLRSRAPVSFPLGTTAINVTGSFVLGLVTALALGHGLPPEWRAILGTGFIGGYTTFSTASYEAVRLAQQRQYRAALLTGVGMMFLALGAAGLGLWLGGLAVAPTPPAPSTTL</sequence>
<organism>
    <name type="scientific">Leifsonia xyli subsp. xyli (strain CTCB07)</name>
    <dbReference type="NCBI Taxonomy" id="281090"/>
    <lineage>
        <taxon>Bacteria</taxon>
        <taxon>Bacillati</taxon>
        <taxon>Actinomycetota</taxon>
        <taxon>Actinomycetes</taxon>
        <taxon>Micrococcales</taxon>
        <taxon>Microbacteriaceae</taxon>
        <taxon>Leifsonia</taxon>
    </lineage>
</organism>
<dbReference type="EMBL" id="AE016822">
    <property type="protein sequence ID" value="AAT88160.1"/>
    <property type="molecule type" value="Genomic_DNA"/>
</dbReference>
<dbReference type="RefSeq" id="WP_011185165.1">
    <property type="nucleotide sequence ID" value="NC_006087.1"/>
</dbReference>
<dbReference type="SMR" id="Q6AHI5"/>
<dbReference type="STRING" id="281090.Lxx00680"/>
<dbReference type="KEGG" id="lxx:Lxx00680"/>
<dbReference type="eggNOG" id="COG0239">
    <property type="taxonomic scope" value="Bacteria"/>
</dbReference>
<dbReference type="HOGENOM" id="CLU_114342_2_3_11"/>
<dbReference type="Proteomes" id="UP000001306">
    <property type="component" value="Chromosome"/>
</dbReference>
<dbReference type="GO" id="GO:0005886">
    <property type="term" value="C:plasma membrane"/>
    <property type="evidence" value="ECO:0007669"/>
    <property type="project" value="UniProtKB-SubCell"/>
</dbReference>
<dbReference type="GO" id="GO:0062054">
    <property type="term" value="F:fluoride channel activity"/>
    <property type="evidence" value="ECO:0007669"/>
    <property type="project" value="UniProtKB-UniRule"/>
</dbReference>
<dbReference type="GO" id="GO:0046872">
    <property type="term" value="F:metal ion binding"/>
    <property type="evidence" value="ECO:0007669"/>
    <property type="project" value="UniProtKB-KW"/>
</dbReference>
<dbReference type="GO" id="GO:0140114">
    <property type="term" value="P:cellular detoxification of fluoride"/>
    <property type="evidence" value="ECO:0007669"/>
    <property type="project" value="UniProtKB-UniRule"/>
</dbReference>
<dbReference type="HAMAP" id="MF_00454">
    <property type="entry name" value="FluC"/>
    <property type="match status" value="1"/>
</dbReference>
<dbReference type="InterPro" id="IPR003691">
    <property type="entry name" value="FluC"/>
</dbReference>
<dbReference type="NCBIfam" id="TIGR00494">
    <property type="entry name" value="crcB"/>
    <property type="match status" value="1"/>
</dbReference>
<dbReference type="PANTHER" id="PTHR28259">
    <property type="entry name" value="FLUORIDE EXPORT PROTEIN 1-RELATED"/>
    <property type="match status" value="1"/>
</dbReference>
<dbReference type="PANTHER" id="PTHR28259:SF1">
    <property type="entry name" value="FLUORIDE EXPORT PROTEIN 1-RELATED"/>
    <property type="match status" value="1"/>
</dbReference>
<dbReference type="Pfam" id="PF02537">
    <property type="entry name" value="CRCB"/>
    <property type="match status" value="1"/>
</dbReference>
<reference key="1">
    <citation type="journal article" date="2004" name="Mol. Plant Microbe Interact.">
        <title>The genome sequence of the Gram-positive sugarcane pathogen Leifsonia xyli subsp. xyli.</title>
        <authorList>
            <person name="Monteiro-Vitorello C.B."/>
            <person name="Camargo L.E.A."/>
            <person name="Van Sluys M.A."/>
            <person name="Kitajima J.P."/>
            <person name="Truffi D."/>
            <person name="do Amaral A.M."/>
            <person name="Harakava R."/>
            <person name="de Oliveira J.C.F."/>
            <person name="Wood D."/>
            <person name="de Oliveira M.C."/>
            <person name="Miyaki C.Y."/>
            <person name="Takita M.A."/>
            <person name="da Silva A.C.R."/>
            <person name="Furlan L.R."/>
            <person name="Carraro D.M."/>
            <person name="Camarotte G."/>
            <person name="Almeida N.F. Jr."/>
            <person name="Carrer H."/>
            <person name="Coutinho L.L."/>
            <person name="El-Dorry H.A."/>
            <person name="Ferro M.I.T."/>
            <person name="Gagliardi P.R."/>
            <person name="Giglioti E."/>
            <person name="Goldman M.H.S."/>
            <person name="Goldman G.H."/>
            <person name="Kimura E.T."/>
            <person name="Ferro E.S."/>
            <person name="Kuramae E.E."/>
            <person name="Lemos E.G.M."/>
            <person name="Lemos M.V.F."/>
            <person name="Mauro S.M.Z."/>
            <person name="Machado M.A."/>
            <person name="Marino C.L."/>
            <person name="Menck C.F."/>
            <person name="Nunes L.R."/>
            <person name="Oliveira R.C."/>
            <person name="Pereira G.G."/>
            <person name="Siqueira W."/>
            <person name="de Souza A.A."/>
            <person name="Tsai S.M."/>
            <person name="Zanca A.S."/>
            <person name="Simpson A.J.G."/>
            <person name="Brumbley S.M."/>
            <person name="Setubal J.C."/>
        </authorList>
    </citation>
    <scope>NUCLEOTIDE SEQUENCE [LARGE SCALE GENOMIC DNA]</scope>
    <source>
        <strain>CTCB07</strain>
    </source>
</reference>
<protein>
    <recommendedName>
        <fullName evidence="1">Fluoride-specific ion channel FluC 1</fullName>
    </recommendedName>
</protein>